<keyword id="KW-0687">Ribonucleoprotein</keyword>
<keyword id="KW-0689">Ribosomal protein</keyword>
<keyword id="KW-0694">RNA-binding</keyword>
<keyword id="KW-0699">rRNA-binding</keyword>
<sequence>MKLHDLKPAPGAHRERKRIGRGIGSGKGKTGGKGMMGQKARSGPKPSPSFEGGQMRITRKMPKLRGFKNRWRVEYQVINIGQLNDVPDGTELTIEEMVAQGWIHPAKPVKILGDGELERKLTIHAHKFSASARARIEAAGGAAIETPWVVERRSRSRGPNPPRHSRKAETPQKA</sequence>
<protein>
    <recommendedName>
        <fullName evidence="1">Large ribosomal subunit protein uL15</fullName>
    </recommendedName>
    <alternativeName>
        <fullName evidence="3">50S ribosomal protein L15</fullName>
    </alternativeName>
</protein>
<accession>A5USH0</accession>
<proteinExistence type="inferred from homology"/>
<feature type="chain" id="PRO_1000054532" description="Large ribosomal subunit protein uL15">
    <location>
        <begin position="1"/>
        <end position="174"/>
    </location>
</feature>
<feature type="region of interest" description="Disordered" evidence="2">
    <location>
        <begin position="1"/>
        <end position="57"/>
    </location>
</feature>
<feature type="region of interest" description="Disordered" evidence="2">
    <location>
        <begin position="147"/>
        <end position="174"/>
    </location>
</feature>
<feature type="compositionally biased region" description="Gly residues" evidence="2">
    <location>
        <begin position="21"/>
        <end position="35"/>
    </location>
</feature>
<reference key="1">
    <citation type="submission" date="2007-04" db="EMBL/GenBank/DDBJ databases">
        <title>Complete sequence of Roseiflexus sp. RS-1.</title>
        <authorList>
            <consortium name="US DOE Joint Genome Institute"/>
            <person name="Copeland A."/>
            <person name="Lucas S."/>
            <person name="Lapidus A."/>
            <person name="Barry K."/>
            <person name="Detter J.C."/>
            <person name="Glavina del Rio T."/>
            <person name="Hammon N."/>
            <person name="Israni S."/>
            <person name="Dalin E."/>
            <person name="Tice H."/>
            <person name="Pitluck S."/>
            <person name="Chertkov O."/>
            <person name="Brettin T."/>
            <person name="Bruce D."/>
            <person name="Han C."/>
            <person name="Schmutz J."/>
            <person name="Larimer F."/>
            <person name="Land M."/>
            <person name="Hauser L."/>
            <person name="Kyrpides N."/>
            <person name="Mikhailova N."/>
            <person name="Bryant D.A."/>
            <person name="Richardson P."/>
        </authorList>
    </citation>
    <scope>NUCLEOTIDE SEQUENCE [LARGE SCALE GENOMIC DNA]</scope>
    <source>
        <strain>RS-1</strain>
    </source>
</reference>
<gene>
    <name evidence="1" type="primary">rplO</name>
    <name type="ordered locus">RoseRS_1166</name>
</gene>
<name>RL15_ROSS1</name>
<comment type="function">
    <text evidence="1">Binds to the 23S rRNA.</text>
</comment>
<comment type="subunit">
    <text evidence="1">Part of the 50S ribosomal subunit.</text>
</comment>
<comment type="similarity">
    <text evidence="1">Belongs to the universal ribosomal protein uL15 family.</text>
</comment>
<organism>
    <name type="scientific">Roseiflexus sp. (strain RS-1)</name>
    <dbReference type="NCBI Taxonomy" id="357808"/>
    <lineage>
        <taxon>Bacteria</taxon>
        <taxon>Bacillati</taxon>
        <taxon>Chloroflexota</taxon>
        <taxon>Chloroflexia</taxon>
        <taxon>Chloroflexales</taxon>
        <taxon>Roseiflexineae</taxon>
        <taxon>Roseiflexaceae</taxon>
        <taxon>Roseiflexus</taxon>
    </lineage>
</organism>
<dbReference type="EMBL" id="CP000686">
    <property type="protein sequence ID" value="ABQ89573.1"/>
    <property type="molecule type" value="Genomic_DNA"/>
</dbReference>
<dbReference type="RefSeq" id="WP_011955926.1">
    <property type="nucleotide sequence ID" value="NC_009523.1"/>
</dbReference>
<dbReference type="SMR" id="A5USH0"/>
<dbReference type="STRING" id="357808.RoseRS_1166"/>
<dbReference type="KEGG" id="rrs:RoseRS_1166"/>
<dbReference type="eggNOG" id="COG0200">
    <property type="taxonomic scope" value="Bacteria"/>
</dbReference>
<dbReference type="HOGENOM" id="CLU_055188_4_2_0"/>
<dbReference type="OrthoDB" id="9810293at2"/>
<dbReference type="Proteomes" id="UP000006554">
    <property type="component" value="Chromosome"/>
</dbReference>
<dbReference type="GO" id="GO:0022625">
    <property type="term" value="C:cytosolic large ribosomal subunit"/>
    <property type="evidence" value="ECO:0007669"/>
    <property type="project" value="TreeGrafter"/>
</dbReference>
<dbReference type="GO" id="GO:0019843">
    <property type="term" value="F:rRNA binding"/>
    <property type="evidence" value="ECO:0007669"/>
    <property type="project" value="UniProtKB-UniRule"/>
</dbReference>
<dbReference type="GO" id="GO:0003735">
    <property type="term" value="F:structural constituent of ribosome"/>
    <property type="evidence" value="ECO:0007669"/>
    <property type="project" value="InterPro"/>
</dbReference>
<dbReference type="GO" id="GO:0006412">
    <property type="term" value="P:translation"/>
    <property type="evidence" value="ECO:0007669"/>
    <property type="project" value="UniProtKB-UniRule"/>
</dbReference>
<dbReference type="Gene3D" id="3.100.10.10">
    <property type="match status" value="1"/>
</dbReference>
<dbReference type="HAMAP" id="MF_01341">
    <property type="entry name" value="Ribosomal_uL15"/>
    <property type="match status" value="1"/>
</dbReference>
<dbReference type="InterPro" id="IPR030878">
    <property type="entry name" value="Ribosomal_uL15"/>
</dbReference>
<dbReference type="InterPro" id="IPR021131">
    <property type="entry name" value="Ribosomal_uL15/eL18"/>
</dbReference>
<dbReference type="InterPro" id="IPR036227">
    <property type="entry name" value="Ribosomal_uL15/eL18_sf"/>
</dbReference>
<dbReference type="InterPro" id="IPR005749">
    <property type="entry name" value="Ribosomal_uL15_bac-type"/>
</dbReference>
<dbReference type="InterPro" id="IPR001196">
    <property type="entry name" value="Ribosomal_uL15_CS"/>
</dbReference>
<dbReference type="NCBIfam" id="TIGR01071">
    <property type="entry name" value="rplO_bact"/>
    <property type="match status" value="1"/>
</dbReference>
<dbReference type="PANTHER" id="PTHR12934">
    <property type="entry name" value="50S RIBOSOMAL PROTEIN L15"/>
    <property type="match status" value="1"/>
</dbReference>
<dbReference type="PANTHER" id="PTHR12934:SF11">
    <property type="entry name" value="LARGE RIBOSOMAL SUBUNIT PROTEIN UL15M"/>
    <property type="match status" value="1"/>
</dbReference>
<dbReference type="Pfam" id="PF00828">
    <property type="entry name" value="Ribosomal_L27A"/>
    <property type="match status" value="1"/>
</dbReference>
<dbReference type="SUPFAM" id="SSF52080">
    <property type="entry name" value="Ribosomal proteins L15p and L18e"/>
    <property type="match status" value="1"/>
</dbReference>
<dbReference type="PROSITE" id="PS00475">
    <property type="entry name" value="RIBOSOMAL_L15"/>
    <property type="match status" value="1"/>
</dbReference>
<evidence type="ECO:0000255" key="1">
    <source>
        <dbReference type="HAMAP-Rule" id="MF_01341"/>
    </source>
</evidence>
<evidence type="ECO:0000256" key="2">
    <source>
        <dbReference type="SAM" id="MobiDB-lite"/>
    </source>
</evidence>
<evidence type="ECO:0000305" key="3"/>